<feature type="chain" id="PRO_0000368257" description="Cytoplasmic tRNA 2-thiolation protein 1">
    <location>
        <begin position="1"/>
        <end position="341"/>
    </location>
</feature>
<protein>
    <recommendedName>
        <fullName evidence="1">Cytoplasmic tRNA 2-thiolation protein 1</fullName>
        <ecNumber evidence="1">2.7.7.-</ecNumber>
    </recommendedName>
    <alternativeName>
        <fullName evidence="1">Cytoplasmic tRNA adenylyltransferase 1</fullName>
    </alternativeName>
</protein>
<comment type="function">
    <text evidence="1">Plays a central role in 2-thiolation of mcm(5)S(2)U at tRNA wobble positions of tRNA(Lys), tRNA(Glu) and tRNA(Gln). Directly binds tRNAs and probably acts by catalyzing adenylation of tRNAs, an intermediate required for 2-thiolation. It is unclear whether it acts as a sulfurtransferase that transfers sulfur from thiocarboxylated urm1 onto the uridine of tRNAs at wobble position. Prior mcm(5) tRNA modification by the elongator complex is required for 2-thiolation. May also be involved in protein urmylation.</text>
</comment>
<comment type="pathway">
    <text evidence="1">tRNA modification; 5-methoxycarbonylmethyl-2-thiouridine-tRNA biosynthesis.</text>
</comment>
<comment type="subcellular location">
    <subcellularLocation>
        <location evidence="1">Cytoplasm</location>
    </subcellularLocation>
</comment>
<comment type="similarity">
    <text evidence="1">Belongs to the TtcA family. CTU1/NCS6/ATPBD3 subfamily.</text>
</comment>
<name>CTU1_ASPNC</name>
<keyword id="KW-0963">Cytoplasm</keyword>
<keyword id="KW-1185">Reference proteome</keyword>
<keyword id="KW-0694">RNA-binding</keyword>
<keyword id="KW-0808">Transferase</keyword>
<keyword id="KW-0819">tRNA processing</keyword>
<keyword id="KW-0820">tRNA-binding</keyword>
<proteinExistence type="inferred from homology"/>
<evidence type="ECO:0000255" key="1">
    <source>
        <dbReference type="HAMAP-Rule" id="MF_03053"/>
    </source>
</evidence>
<gene>
    <name type="primary">ncs6</name>
    <name type="synonym">ctu1</name>
    <name type="ORF">An01g03360</name>
</gene>
<accession>A2Q879</accession>
<reference key="1">
    <citation type="journal article" date="2007" name="Nat. Biotechnol.">
        <title>Genome sequencing and analysis of the versatile cell factory Aspergillus niger CBS 513.88.</title>
        <authorList>
            <person name="Pel H.J."/>
            <person name="de Winde J.H."/>
            <person name="Archer D.B."/>
            <person name="Dyer P.S."/>
            <person name="Hofmann G."/>
            <person name="Schaap P.J."/>
            <person name="Turner G."/>
            <person name="de Vries R.P."/>
            <person name="Albang R."/>
            <person name="Albermann K."/>
            <person name="Andersen M.R."/>
            <person name="Bendtsen J.D."/>
            <person name="Benen J.A.E."/>
            <person name="van den Berg M."/>
            <person name="Breestraat S."/>
            <person name="Caddick M.X."/>
            <person name="Contreras R."/>
            <person name="Cornell M."/>
            <person name="Coutinho P.M."/>
            <person name="Danchin E.G.J."/>
            <person name="Debets A.J.M."/>
            <person name="Dekker P."/>
            <person name="van Dijck P.W.M."/>
            <person name="van Dijk A."/>
            <person name="Dijkhuizen L."/>
            <person name="Driessen A.J.M."/>
            <person name="d'Enfert C."/>
            <person name="Geysens S."/>
            <person name="Goosen C."/>
            <person name="Groot G.S.P."/>
            <person name="de Groot P.W.J."/>
            <person name="Guillemette T."/>
            <person name="Henrissat B."/>
            <person name="Herweijer M."/>
            <person name="van den Hombergh J.P.T.W."/>
            <person name="van den Hondel C.A.M.J.J."/>
            <person name="van der Heijden R.T.J.M."/>
            <person name="van der Kaaij R.M."/>
            <person name="Klis F.M."/>
            <person name="Kools H.J."/>
            <person name="Kubicek C.P."/>
            <person name="van Kuyk P.A."/>
            <person name="Lauber J."/>
            <person name="Lu X."/>
            <person name="van der Maarel M.J.E.C."/>
            <person name="Meulenberg R."/>
            <person name="Menke H."/>
            <person name="Mortimer M.A."/>
            <person name="Nielsen J."/>
            <person name="Oliver S.G."/>
            <person name="Olsthoorn M."/>
            <person name="Pal K."/>
            <person name="van Peij N.N.M.E."/>
            <person name="Ram A.F.J."/>
            <person name="Rinas U."/>
            <person name="Roubos J.A."/>
            <person name="Sagt C.M.J."/>
            <person name="Schmoll M."/>
            <person name="Sun J."/>
            <person name="Ussery D."/>
            <person name="Varga J."/>
            <person name="Vervecken W."/>
            <person name="van de Vondervoort P.J.J."/>
            <person name="Wedler H."/>
            <person name="Woesten H.A.B."/>
            <person name="Zeng A.-P."/>
            <person name="van Ooyen A.J.J."/>
            <person name="Visser J."/>
            <person name="Stam H."/>
        </authorList>
    </citation>
    <scope>NUCLEOTIDE SEQUENCE [LARGE SCALE GENOMIC DNA]</scope>
    <source>
        <strain>ATCC MYA-4892 / CBS 513.88 / FGSC A1513</strain>
    </source>
</reference>
<sequence length="341" mass="37956">MPPSPCARCHDQRAVIIRPKNRQKLCRTCFLHVFETEVHETITSTSLFHPGERVAIGASGGKDSTVLAAVLKTLNERYNYGLDLCLLSIDEGIKGYRDDSLETVKRNAQQYNMPLVIVSYGDLYGWTMDQVVAQVGKKGNCTYCGVFRRQALDRGAAKLGIKHVVTGHNADDVAETVMMNLLRGDLPRLSRGTSIVTGSAASDIKRSKPLKYAYEKEIVLYAHHRQLDYFSTECIYSPEAFRGSARTLIKDLEKIRPSSILDIVKSGEDMALLKKVKSQVLGTCERCGYISSQRVCKACTLLEGLNKNRPKTAIEMEIGLEDEESSSTLRRQMEKVELGGV</sequence>
<dbReference type="EC" id="2.7.7.-" evidence="1"/>
<dbReference type="EMBL" id="AM269957">
    <property type="protein sequence ID" value="CAK36876.1"/>
    <property type="molecule type" value="Genomic_DNA"/>
</dbReference>
<dbReference type="SMR" id="A2Q879"/>
<dbReference type="EnsemblFungi" id="CAK36876">
    <property type="protein sequence ID" value="CAK36876"/>
    <property type="gene ID" value="An01g03360"/>
</dbReference>
<dbReference type="VEuPathDB" id="FungiDB:An01g03360"/>
<dbReference type="HOGENOM" id="CLU_026481_1_0_1"/>
<dbReference type="UniPathway" id="UPA00988"/>
<dbReference type="Proteomes" id="UP000006706">
    <property type="component" value="Chromosome 2R"/>
</dbReference>
<dbReference type="GO" id="GO:0005829">
    <property type="term" value="C:cytosol"/>
    <property type="evidence" value="ECO:0000250"/>
    <property type="project" value="UniProtKB"/>
</dbReference>
<dbReference type="GO" id="GO:0002144">
    <property type="term" value="C:cytosolic tRNA wobble base thiouridylase complex"/>
    <property type="evidence" value="ECO:0007669"/>
    <property type="project" value="EnsemblFungi"/>
</dbReference>
<dbReference type="GO" id="GO:0005739">
    <property type="term" value="C:mitochondrion"/>
    <property type="evidence" value="ECO:0007669"/>
    <property type="project" value="TreeGrafter"/>
</dbReference>
<dbReference type="GO" id="GO:0005777">
    <property type="term" value="C:peroxisome"/>
    <property type="evidence" value="ECO:0007669"/>
    <property type="project" value="EnsemblFungi"/>
</dbReference>
<dbReference type="GO" id="GO:0016779">
    <property type="term" value="F:nucleotidyltransferase activity"/>
    <property type="evidence" value="ECO:0007669"/>
    <property type="project" value="UniProtKB-UniRule"/>
</dbReference>
<dbReference type="GO" id="GO:0000049">
    <property type="term" value="F:tRNA binding"/>
    <property type="evidence" value="ECO:0000250"/>
    <property type="project" value="UniProtKB"/>
</dbReference>
<dbReference type="GO" id="GO:0103016">
    <property type="term" value="F:tRNA-uridine 2-sulfurtransferase activity"/>
    <property type="evidence" value="ECO:0007669"/>
    <property type="project" value="EnsemblFungi"/>
</dbReference>
<dbReference type="GO" id="GO:0032447">
    <property type="term" value="P:protein urmylation"/>
    <property type="evidence" value="ECO:0007669"/>
    <property type="project" value="UniProtKB-UniRule"/>
</dbReference>
<dbReference type="GO" id="GO:0034227">
    <property type="term" value="P:tRNA thio-modification"/>
    <property type="evidence" value="ECO:0000250"/>
    <property type="project" value="UniProtKB"/>
</dbReference>
<dbReference type="GO" id="GO:0002143">
    <property type="term" value="P:tRNA wobble position uridine thiolation"/>
    <property type="evidence" value="ECO:0007669"/>
    <property type="project" value="EnsemblFungi"/>
</dbReference>
<dbReference type="GO" id="GO:0002098">
    <property type="term" value="P:tRNA wobble uridine modification"/>
    <property type="evidence" value="ECO:0000250"/>
    <property type="project" value="UniProtKB"/>
</dbReference>
<dbReference type="CDD" id="cd01713">
    <property type="entry name" value="CTU1-like"/>
    <property type="match status" value="1"/>
</dbReference>
<dbReference type="FunFam" id="3.40.50.620:FF:000054">
    <property type="entry name" value="Cytoplasmic tRNA 2-thiolation protein 1"/>
    <property type="match status" value="1"/>
</dbReference>
<dbReference type="Gene3D" id="3.40.50.620">
    <property type="entry name" value="HUPs"/>
    <property type="match status" value="1"/>
</dbReference>
<dbReference type="HAMAP" id="MF_03053">
    <property type="entry name" value="CTU1"/>
    <property type="match status" value="1"/>
</dbReference>
<dbReference type="InterPro" id="IPR056369">
    <property type="entry name" value="CTU1-like_ATP-bd"/>
</dbReference>
<dbReference type="InterPro" id="IPR032442">
    <property type="entry name" value="CTU1_C"/>
</dbReference>
<dbReference type="InterPro" id="IPR000541">
    <property type="entry name" value="Ncs6/Tuc1/Ctu1"/>
</dbReference>
<dbReference type="InterPro" id="IPR014729">
    <property type="entry name" value="Rossmann-like_a/b/a_fold"/>
</dbReference>
<dbReference type="InterPro" id="IPR011063">
    <property type="entry name" value="TilS/TtcA_N"/>
</dbReference>
<dbReference type="InterPro" id="IPR035107">
    <property type="entry name" value="tRNA_thiolation_TtcA_Ctu1"/>
</dbReference>
<dbReference type="NCBIfam" id="TIGR00269">
    <property type="entry name" value="TIGR00269 family protein"/>
    <property type="match status" value="1"/>
</dbReference>
<dbReference type="PANTHER" id="PTHR11807">
    <property type="entry name" value="ATPASES OF THE PP SUPERFAMILY-RELATED"/>
    <property type="match status" value="1"/>
</dbReference>
<dbReference type="PANTHER" id="PTHR11807:SF12">
    <property type="entry name" value="CYTOPLASMIC TRNA 2-THIOLATION PROTEIN 1"/>
    <property type="match status" value="1"/>
</dbReference>
<dbReference type="Pfam" id="PF01171">
    <property type="entry name" value="ATP_bind_3"/>
    <property type="match status" value="1"/>
</dbReference>
<dbReference type="Pfam" id="PF16503">
    <property type="entry name" value="zn-ribbon_14"/>
    <property type="match status" value="1"/>
</dbReference>
<dbReference type="PIRSF" id="PIRSF004976">
    <property type="entry name" value="ATPase_YdaO"/>
    <property type="match status" value="1"/>
</dbReference>
<dbReference type="SUPFAM" id="SSF52402">
    <property type="entry name" value="Adenine nucleotide alpha hydrolases-like"/>
    <property type="match status" value="1"/>
</dbReference>
<organism>
    <name type="scientific">Aspergillus niger (strain ATCC MYA-4892 / CBS 513.88 / FGSC A1513)</name>
    <dbReference type="NCBI Taxonomy" id="425011"/>
    <lineage>
        <taxon>Eukaryota</taxon>
        <taxon>Fungi</taxon>
        <taxon>Dikarya</taxon>
        <taxon>Ascomycota</taxon>
        <taxon>Pezizomycotina</taxon>
        <taxon>Eurotiomycetes</taxon>
        <taxon>Eurotiomycetidae</taxon>
        <taxon>Eurotiales</taxon>
        <taxon>Aspergillaceae</taxon>
        <taxon>Aspergillus</taxon>
        <taxon>Aspergillus subgen. Circumdati</taxon>
    </lineage>
</organism>